<comment type="function">
    <text evidence="1">Catalyzes the conversion of 1-hydroxy-2-methyl-2-(E)-butenyl 4-diphosphate (HMBPP) into a mixture of isopentenyl diphosphate (IPP) and dimethylallyl diphosphate (DMAPP). Acts in the terminal step of the DOXP/MEP pathway for isoprenoid precursor biosynthesis.</text>
</comment>
<comment type="catalytic activity">
    <reaction evidence="1">
        <text>isopentenyl diphosphate + 2 oxidized [2Fe-2S]-[ferredoxin] + H2O = (2E)-4-hydroxy-3-methylbut-2-enyl diphosphate + 2 reduced [2Fe-2S]-[ferredoxin] + 2 H(+)</text>
        <dbReference type="Rhea" id="RHEA:24488"/>
        <dbReference type="Rhea" id="RHEA-COMP:10000"/>
        <dbReference type="Rhea" id="RHEA-COMP:10001"/>
        <dbReference type="ChEBI" id="CHEBI:15377"/>
        <dbReference type="ChEBI" id="CHEBI:15378"/>
        <dbReference type="ChEBI" id="CHEBI:33737"/>
        <dbReference type="ChEBI" id="CHEBI:33738"/>
        <dbReference type="ChEBI" id="CHEBI:128753"/>
        <dbReference type="ChEBI" id="CHEBI:128769"/>
        <dbReference type="EC" id="1.17.7.4"/>
    </reaction>
</comment>
<comment type="catalytic activity">
    <reaction evidence="1">
        <text>dimethylallyl diphosphate + 2 oxidized [2Fe-2S]-[ferredoxin] + H2O = (2E)-4-hydroxy-3-methylbut-2-enyl diphosphate + 2 reduced [2Fe-2S]-[ferredoxin] + 2 H(+)</text>
        <dbReference type="Rhea" id="RHEA:24825"/>
        <dbReference type="Rhea" id="RHEA-COMP:10000"/>
        <dbReference type="Rhea" id="RHEA-COMP:10001"/>
        <dbReference type="ChEBI" id="CHEBI:15377"/>
        <dbReference type="ChEBI" id="CHEBI:15378"/>
        <dbReference type="ChEBI" id="CHEBI:33737"/>
        <dbReference type="ChEBI" id="CHEBI:33738"/>
        <dbReference type="ChEBI" id="CHEBI:57623"/>
        <dbReference type="ChEBI" id="CHEBI:128753"/>
        <dbReference type="EC" id="1.17.7.4"/>
    </reaction>
</comment>
<comment type="cofactor">
    <cofactor evidence="1">
        <name>[4Fe-4S] cluster</name>
        <dbReference type="ChEBI" id="CHEBI:49883"/>
    </cofactor>
    <text evidence="1">Binds 1 [4Fe-4S] cluster per subunit.</text>
</comment>
<comment type="pathway">
    <text evidence="1">Isoprenoid biosynthesis; dimethylallyl diphosphate biosynthesis; dimethylallyl diphosphate from (2E)-4-hydroxy-3-methylbutenyl diphosphate: step 1/1.</text>
</comment>
<comment type="pathway">
    <text evidence="1">Isoprenoid biosynthesis; isopentenyl diphosphate biosynthesis via DXP pathway; isopentenyl diphosphate from 1-deoxy-D-xylulose 5-phosphate: step 6/6.</text>
</comment>
<comment type="similarity">
    <text evidence="1">Belongs to the IspH family.</text>
</comment>
<proteinExistence type="inferred from homology"/>
<keyword id="KW-0004">4Fe-4S</keyword>
<keyword id="KW-0408">Iron</keyword>
<keyword id="KW-0411">Iron-sulfur</keyword>
<keyword id="KW-0414">Isoprene biosynthesis</keyword>
<keyword id="KW-0479">Metal-binding</keyword>
<keyword id="KW-0560">Oxidoreductase</keyword>
<sequence length="277" mass="31523">MIIELAKNYGFCFGVKRAIKKAEQIKDAATIGPLIHNNEEISRLQKNFNVKTLENIQALSNEKKAIIRTHGITKQDLEELRKKDIEIFDATCPFVTKPQQICEQMSKEGYEVVIFGDENHPEVKGVKSYVSTKAYVVLDKKELQNIKLPNKIAVVSQTTKKPEHFMEIVNFLILKTKEVRVFNTICDATFKNQDAIKELSLKSDVMVVVGGKNSANTKQLFLIAKTNCEDSYLIETEEELKKEWFLDKKHCGISAGASTPDWIIQKVIAKIENFKIN</sequence>
<dbReference type="EC" id="1.17.7.4" evidence="1"/>
<dbReference type="EMBL" id="CP000025">
    <property type="protein sequence ID" value="AAW35306.1"/>
    <property type="molecule type" value="Genomic_DNA"/>
</dbReference>
<dbReference type="RefSeq" id="WP_002857098.1">
    <property type="nucleotide sequence ID" value="NC_003912.7"/>
</dbReference>
<dbReference type="SMR" id="Q5HUR4"/>
<dbReference type="KEGG" id="cjr:CJE0973"/>
<dbReference type="HOGENOM" id="CLU_027486_0_1_7"/>
<dbReference type="UniPathway" id="UPA00056">
    <property type="reaction ID" value="UER00097"/>
</dbReference>
<dbReference type="UniPathway" id="UPA00059">
    <property type="reaction ID" value="UER00105"/>
</dbReference>
<dbReference type="GO" id="GO:0051539">
    <property type="term" value="F:4 iron, 4 sulfur cluster binding"/>
    <property type="evidence" value="ECO:0007669"/>
    <property type="project" value="UniProtKB-UniRule"/>
</dbReference>
<dbReference type="GO" id="GO:0051745">
    <property type="term" value="F:4-hydroxy-3-methylbut-2-enyl diphosphate reductase activity"/>
    <property type="evidence" value="ECO:0007669"/>
    <property type="project" value="UniProtKB-UniRule"/>
</dbReference>
<dbReference type="GO" id="GO:0046872">
    <property type="term" value="F:metal ion binding"/>
    <property type="evidence" value="ECO:0007669"/>
    <property type="project" value="UniProtKB-KW"/>
</dbReference>
<dbReference type="GO" id="GO:0050992">
    <property type="term" value="P:dimethylallyl diphosphate biosynthetic process"/>
    <property type="evidence" value="ECO:0007669"/>
    <property type="project" value="UniProtKB-UniRule"/>
</dbReference>
<dbReference type="GO" id="GO:0019288">
    <property type="term" value="P:isopentenyl diphosphate biosynthetic process, methylerythritol 4-phosphate pathway"/>
    <property type="evidence" value="ECO:0007669"/>
    <property type="project" value="UniProtKB-UniRule"/>
</dbReference>
<dbReference type="GO" id="GO:0016114">
    <property type="term" value="P:terpenoid biosynthetic process"/>
    <property type="evidence" value="ECO:0007669"/>
    <property type="project" value="UniProtKB-UniRule"/>
</dbReference>
<dbReference type="CDD" id="cd13944">
    <property type="entry name" value="lytB_ispH"/>
    <property type="match status" value="1"/>
</dbReference>
<dbReference type="Gene3D" id="3.40.50.11270">
    <property type="match status" value="1"/>
</dbReference>
<dbReference type="Gene3D" id="3.40.1010.20">
    <property type="entry name" value="4-hydroxy-3-methylbut-2-enyl diphosphate reductase, catalytic domain"/>
    <property type="match status" value="2"/>
</dbReference>
<dbReference type="HAMAP" id="MF_00191">
    <property type="entry name" value="IspH"/>
    <property type="match status" value="1"/>
</dbReference>
<dbReference type="InterPro" id="IPR003451">
    <property type="entry name" value="LytB/IspH"/>
</dbReference>
<dbReference type="NCBIfam" id="TIGR00216">
    <property type="entry name" value="ispH_lytB"/>
    <property type="match status" value="1"/>
</dbReference>
<dbReference type="NCBIfam" id="NF002187">
    <property type="entry name" value="PRK01045.1-1"/>
    <property type="match status" value="1"/>
</dbReference>
<dbReference type="PANTHER" id="PTHR30426">
    <property type="entry name" value="4-HYDROXY-3-METHYLBUT-2-ENYL DIPHOSPHATE REDUCTASE"/>
    <property type="match status" value="1"/>
</dbReference>
<dbReference type="PANTHER" id="PTHR30426:SF0">
    <property type="entry name" value="4-HYDROXY-3-METHYLBUT-2-ENYL DIPHOSPHATE REDUCTASE"/>
    <property type="match status" value="1"/>
</dbReference>
<dbReference type="Pfam" id="PF02401">
    <property type="entry name" value="LYTB"/>
    <property type="match status" value="1"/>
</dbReference>
<reference key="1">
    <citation type="journal article" date="2005" name="PLoS Biol.">
        <title>Major structural differences and novel potential virulence mechanisms from the genomes of multiple Campylobacter species.</title>
        <authorList>
            <person name="Fouts D.E."/>
            <person name="Mongodin E.F."/>
            <person name="Mandrell R.E."/>
            <person name="Miller W.G."/>
            <person name="Rasko D.A."/>
            <person name="Ravel J."/>
            <person name="Brinkac L.M."/>
            <person name="DeBoy R.T."/>
            <person name="Parker C.T."/>
            <person name="Daugherty S.C."/>
            <person name="Dodson R.J."/>
            <person name="Durkin A.S."/>
            <person name="Madupu R."/>
            <person name="Sullivan S.A."/>
            <person name="Shetty J.U."/>
            <person name="Ayodeji M.A."/>
            <person name="Shvartsbeyn A."/>
            <person name="Schatz M.C."/>
            <person name="Badger J.H."/>
            <person name="Fraser C.M."/>
            <person name="Nelson K.E."/>
        </authorList>
    </citation>
    <scope>NUCLEOTIDE SEQUENCE [LARGE SCALE GENOMIC DNA]</scope>
    <source>
        <strain>RM1221</strain>
    </source>
</reference>
<evidence type="ECO:0000255" key="1">
    <source>
        <dbReference type="HAMAP-Rule" id="MF_00191"/>
    </source>
</evidence>
<organism>
    <name type="scientific">Campylobacter jejuni (strain RM1221)</name>
    <dbReference type="NCBI Taxonomy" id="195099"/>
    <lineage>
        <taxon>Bacteria</taxon>
        <taxon>Pseudomonadati</taxon>
        <taxon>Campylobacterota</taxon>
        <taxon>Epsilonproteobacteria</taxon>
        <taxon>Campylobacterales</taxon>
        <taxon>Campylobacteraceae</taxon>
        <taxon>Campylobacter</taxon>
    </lineage>
</organism>
<accession>Q5HUR4</accession>
<protein>
    <recommendedName>
        <fullName evidence="1">4-hydroxy-3-methylbut-2-enyl diphosphate reductase</fullName>
        <shortName evidence="1">HMBPP reductase</shortName>
        <ecNumber evidence="1">1.17.7.4</ecNumber>
    </recommendedName>
</protein>
<name>ISPH_CAMJR</name>
<gene>
    <name evidence="1" type="primary">ispH</name>
    <name type="ordered locus">CJE0973</name>
</gene>
<feature type="chain" id="PRO_0000128796" description="4-hydroxy-3-methylbut-2-enyl diphosphate reductase">
    <location>
        <begin position="1"/>
        <end position="277"/>
    </location>
</feature>
<feature type="active site" description="Proton donor" evidence="1">
    <location>
        <position position="122"/>
    </location>
</feature>
<feature type="binding site" evidence="1">
    <location>
        <position position="12"/>
    </location>
    <ligand>
        <name>[4Fe-4S] cluster</name>
        <dbReference type="ChEBI" id="CHEBI:49883"/>
    </ligand>
</feature>
<feature type="binding site" evidence="1">
    <location>
        <position position="36"/>
    </location>
    <ligand>
        <name>(2E)-4-hydroxy-3-methylbut-2-enyl diphosphate</name>
        <dbReference type="ChEBI" id="CHEBI:128753"/>
    </ligand>
</feature>
<feature type="binding site" evidence="1">
    <location>
        <position position="36"/>
    </location>
    <ligand>
        <name>dimethylallyl diphosphate</name>
        <dbReference type="ChEBI" id="CHEBI:57623"/>
    </ligand>
</feature>
<feature type="binding site" evidence="1">
    <location>
        <position position="36"/>
    </location>
    <ligand>
        <name>isopentenyl diphosphate</name>
        <dbReference type="ChEBI" id="CHEBI:128769"/>
    </ligand>
</feature>
<feature type="binding site" evidence="1">
    <location>
        <position position="70"/>
    </location>
    <ligand>
        <name>(2E)-4-hydroxy-3-methylbut-2-enyl diphosphate</name>
        <dbReference type="ChEBI" id="CHEBI:128753"/>
    </ligand>
</feature>
<feature type="binding site" evidence="1">
    <location>
        <position position="70"/>
    </location>
    <ligand>
        <name>dimethylallyl diphosphate</name>
        <dbReference type="ChEBI" id="CHEBI:57623"/>
    </ligand>
</feature>
<feature type="binding site" evidence="1">
    <location>
        <position position="70"/>
    </location>
    <ligand>
        <name>isopentenyl diphosphate</name>
        <dbReference type="ChEBI" id="CHEBI:128769"/>
    </ligand>
</feature>
<feature type="binding site" evidence="1">
    <location>
        <position position="92"/>
    </location>
    <ligand>
        <name>[4Fe-4S] cluster</name>
        <dbReference type="ChEBI" id="CHEBI:49883"/>
    </ligand>
</feature>
<feature type="binding site" evidence="1">
    <location>
        <position position="120"/>
    </location>
    <ligand>
        <name>(2E)-4-hydroxy-3-methylbut-2-enyl diphosphate</name>
        <dbReference type="ChEBI" id="CHEBI:128753"/>
    </ligand>
</feature>
<feature type="binding site" evidence="1">
    <location>
        <position position="120"/>
    </location>
    <ligand>
        <name>dimethylallyl diphosphate</name>
        <dbReference type="ChEBI" id="CHEBI:57623"/>
    </ligand>
</feature>
<feature type="binding site" evidence="1">
    <location>
        <position position="120"/>
    </location>
    <ligand>
        <name>isopentenyl diphosphate</name>
        <dbReference type="ChEBI" id="CHEBI:128769"/>
    </ligand>
</feature>
<feature type="binding site" evidence="1">
    <location>
        <position position="158"/>
    </location>
    <ligand>
        <name>(2E)-4-hydroxy-3-methylbut-2-enyl diphosphate</name>
        <dbReference type="ChEBI" id="CHEBI:128753"/>
    </ligand>
</feature>
<feature type="binding site" evidence="1">
    <location>
        <position position="186"/>
    </location>
    <ligand>
        <name>[4Fe-4S] cluster</name>
        <dbReference type="ChEBI" id="CHEBI:49883"/>
    </ligand>
</feature>
<feature type="binding site" evidence="1">
    <location>
        <position position="214"/>
    </location>
    <ligand>
        <name>(2E)-4-hydroxy-3-methylbut-2-enyl diphosphate</name>
        <dbReference type="ChEBI" id="CHEBI:128753"/>
    </ligand>
</feature>
<feature type="binding site" evidence="1">
    <location>
        <position position="214"/>
    </location>
    <ligand>
        <name>dimethylallyl diphosphate</name>
        <dbReference type="ChEBI" id="CHEBI:57623"/>
    </ligand>
</feature>
<feature type="binding site" evidence="1">
    <location>
        <position position="214"/>
    </location>
    <ligand>
        <name>isopentenyl diphosphate</name>
        <dbReference type="ChEBI" id="CHEBI:128769"/>
    </ligand>
</feature>
<feature type="binding site" evidence="1">
    <location>
        <position position="216"/>
    </location>
    <ligand>
        <name>(2E)-4-hydroxy-3-methylbut-2-enyl diphosphate</name>
        <dbReference type="ChEBI" id="CHEBI:128753"/>
    </ligand>
</feature>
<feature type="binding site" evidence="1">
    <location>
        <position position="216"/>
    </location>
    <ligand>
        <name>dimethylallyl diphosphate</name>
        <dbReference type="ChEBI" id="CHEBI:57623"/>
    </ligand>
</feature>
<feature type="binding site" evidence="1">
    <location>
        <position position="216"/>
    </location>
    <ligand>
        <name>isopentenyl diphosphate</name>
        <dbReference type="ChEBI" id="CHEBI:128769"/>
    </ligand>
</feature>
<feature type="binding site" evidence="1">
    <location>
        <position position="258"/>
    </location>
    <ligand>
        <name>(2E)-4-hydroxy-3-methylbut-2-enyl diphosphate</name>
        <dbReference type="ChEBI" id="CHEBI:128753"/>
    </ligand>
</feature>
<feature type="binding site" evidence="1">
    <location>
        <position position="258"/>
    </location>
    <ligand>
        <name>dimethylallyl diphosphate</name>
        <dbReference type="ChEBI" id="CHEBI:57623"/>
    </ligand>
</feature>
<feature type="binding site" evidence="1">
    <location>
        <position position="258"/>
    </location>
    <ligand>
        <name>isopentenyl diphosphate</name>
        <dbReference type="ChEBI" id="CHEBI:128769"/>
    </ligand>
</feature>